<reference key="1">
    <citation type="journal article" date="2005" name="Proc. Natl. Acad. Sci. U.S.A.">
        <title>Positive selection of primate TRIM5alpha identifies a critical species-specific retroviral restriction domain.</title>
        <authorList>
            <person name="Sawyer S.L."/>
            <person name="Wu L.I."/>
            <person name="Emerman M."/>
            <person name="Malik H.S."/>
        </authorList>
    </citation>
    <scope>NUCLEOTIDE SEQUENCE [GENOMIC DNA]</scope>
</reference>
<reference key="2">
    <citation type="journal article" date="2006" name="Retrovirology">
        <title>Patterns of evolution of host proteins involved in retroviral pathogenesis.</title>
        <authorList>
            <person name="Ortiz M."/>
            <person name="Bleiber G."/>
            <person name="Martinez R."/>
            <person name="Kaessmann H."/>
            <person name="Telenti A."/>
        </authorList>
    </citation>
    <scope>NUCLEOTIDE SEQUENCE [GENOMIC DNA]</scope>
</reference>
<evidence type="ECO:0000250" key="1"/>
<evidence type="ECO:0000250" key="2">
    <source>
        <dbReference type="UniProtKB" id="Q0PF16"/>
    </source>
</evidence>
<evidence type="ECO:0000250" key="3">
    <source>
        <dbReference type="UniProtKB" id="Q9C035"/>
    </source>
</evidence>
<evidence type="ECO:0000255" key="4"/>
<evidence type="ECO:0000255" key="5">
    <source>
        <dbReference type="PROSITE-ProRule" id="PRU00024"/>
    </source>
</evidence>
<evidence type="ECO:0000255" key="6">
    <source>
        <dbReference type="PROSITE-ProRule" id="PRU00175"/>
    </source>
</evidence>
<evidence type="ECO:0000255" key="7">
    <source>
        <dbReference type="PROSITE-ProRule" id="PRU00548"/>
    </source>
</evidence>
<evidence type="ECO:0000305" key="8"/>
<gene>
    <name type="primary">TRIM5</name>
</gene>
<comment type="function">
    <text evidence="3">Capsid-specific restriction factor that prevents infection from non-host-adapted retroviruses. Blocks viral replication early in the life cycle, after viral entry but before reverse transcription. In addition to acting as a capsid-specific restriction factor, also acts as a pattern recognition receptor that activates innate immune signaling in response to the retroviral capsid lattice. Binding to the viral capsid triggers its E3 ubiquitin ligase activity, and in concert with the heterodimeric ubiquitin conjugating enzyme complex UBE2V1-UBE2N (also known as UBC13-UEV1A complex) generates 'Lys-63'-linked polyubiquitin chains, which in turn are catalysts in the autophosphorylation of the MAP3K7/TAK1 complex (includes TAK1, TAB2, and TAB3). Activation of the MAP3K7/TAK1 complex by autophosphorylation results in the induction and expression of NF-kappa-B and MAPK-responsive inflammatory genes, thereby leading to an innate immune response in the infected cell. Plays a role in regulating autophagy through activation of autophagy regulator BECN1 by causing its dissociation from its inhibitors BCL2 and TAB2.</text>
</comment>
<comment type="catalytic activity">
    <reaction>
        <text>S-ubiquitinyl-[E2 ubiquitin-conjugating enzyme]-L-cysteine + [acceptor protein]-L-lysine = [E2 ubiquitin-conjugating enzyme]-L-cysteine + N(6)-ubiquitinyl-[acceptor protein]-L-lysine.</text>
        <dbReference type="EC" id="2.3.2.27"/>
    </reaction>
</comment>
<comment type="pathway">
    <text>Protein modification; protein ubiquitination.</text>
</comment>
<comment type="subunit">
    <text evidence="2 3">Can form homodimers and homotrimers. In addition to lower-order dimerization, also exhibits a higher-order multimerization and both low- and high-order multimerizations are essential for its restriction activity. Interacts with BTBD1 and BTBD2. Interacts with PSMC4, PSMC5, PSMD7 and HSPA8/HSC70. Interacts (via B30.2/SPRY domain) with HSPA1A/B. Interacts with PSMC2, MAP3K7/TAK1, TAB2 and TAB3. Interacts with SQSTM1. Interacts with TRIM6 and TRIM34. Interacts with ULK1 (phosphorylated form), GABARAP, GABARAPL1, GABARAPL2, MAP1LC3A, MAP1LC3C and BECN1.</text>
</comment>
<comment type="subcellular location">
    <subcellularLocation>
        <location evidence="2">Cytoplasm</location>
    </subcellularLocation>
    <subcellularLocation>
        <location evidence="2">Nucleus</location>
    </subcellularLocation>
    <text evidence="2">Predominantly localizes in cytoplasmic bodies. Localization may be influenced by the coexpression of other TRIM proteins, hence partial nuclear localization is observed in the presence of TRIM22 or TRIM27. In cytoplasmic bodies, colocalizes with proteasomal subunits and SQSTM1.</text>
</comment>
<comment type="domain">
    <text evidence="2 3">The B box-type zinc finger domain and the coiled-coil domain contribute to the higher and low order multimerization respectively which is essential for restriction activity. The coiled coil domain is important for higher order multimerization by promoting the initial dimerization.</text>
</comment>
<comment type="domain">
    <text evidence="1">The B30.2/SPRY domain acts as a capsid recognition domain. Polymorphisms in this domain explain the observed species-specific differences among orthologs (By similarity).</text>
</comment>
<comment type="domain">
    <text evidence="1">The RING-type zinc finger domain confers E3 ubiquitin ligase activity and is essential for retrovirus restriction activity, autoubiquitination and higher-order multimerization.</text>
</comment>
<comment type="PTM">
    <text evidence="1">Degraded in a proteasome-independent fashion in the absence of viral infection but in a proteasome-dependent fashion following exposure to restriction sensitive virus.</text>
</comment>
<comment type="PTM">
    <text evidence="1">Autoubiquitinated in a RING finger- and UBE2D2-dependent manner. Monoubiquitinated by TRIM21. Deubiquitinated by Yersinia YopJ. Ubiquitination may not lead to proteasomal degradation (By similarity).</text>
</comment>
<comment type="similarity">
    <text evidence="8">Belongs to the TRIM/RBCC family.</text>
</comment>
<protein>
    <recommendedName>
        <fullName>Tripartite motif-containing protein 5</fullName>
        <ecNumber>2.3.2.27</ecNumber>
    </recommendedName>
    <alternativeName>
        <fullName evidence="8">RING-type E3 ubiquitin transferase TRIM5</fullName>
    </alternativeName>
    <alternativeName>
        <fullName>TRIM5alpha</fullName>
    </alternativeName>
</protein>
<name>TRIM5_SYMSY</name>
<sequence>MASGILVNVKEEVTCPICLELLTQPLSLDCGHSFCQACLTANHKTSMPDEGERSCPVCRISYQHKNIQPNRHVANIVEKLREVKLSPEEGQKVDHCARHGEKLLLFCQEDRKVICWLCERSQEHRGHHTFLTEEVAQEYQVKLQAALQMLRQKQQEAEELEADIREEKASWKTQIQYDKTNILADFEQLRHILDWVESNELQNLEKEEKDVLKRLMRSEIEMVQQTQSVRELISDLEHRLQGSVMELLQGVDGVIKRMKNVTLKKPETFPKNRRRVFRAADLKVMLEVLRELRDVRRYWVDVTVAPNNISYAVISEDMRQVSSPEPQIIFEAQGTISQTFVNFNYCTGILGSQSITSGKHYWEVDVSKKSAWILGVCAGFQPDAMYNIEQNENYQPKYGYWVIGLEEGVKCNAFQDGSIHTPSAPFIVPLSVNICPDRVGVFLDYEACTVSFFNITNHGFLIYKFSHCSFSQPVFPYLNPRKCTVPMTLCSPSS</sequence>
<accession>Q1ACD6</accession>
<accession>Q5D7I8</accession>
<keyword id="KW-0007">Acetylation</keyword>
<keyword id="KW-0051">Antiviral defense</keyword>
<keyword id="KW-0072">Autophagy</keyword>
<keyword id="KW-0175">Coiled coil</keyword>
<keyword id="KW-0963">Cytoplasm</keyword>
<keyword id="KW-0391">Immunity</keyword>
<keyword id="KW-0399">Innate immunity</keyword>
<keyword id="KW-0479">Metal-binding</keyword>
<keyword id="KW-0539">Nucleus</keyword>
<keyword id="KW-0597">Phosphoprotein</keyword>
<keyword id="KW-0808">Transferase</keyword>
<keyword id="KW-0832">Ubl conjugation</keyword>
<keyword id="KW-0833">Ubl conjugation pathway</keyword>
<keyword id="KW-0862">Zinc</keyword>
<keyword id="KW-0863">Zinc-finger</keyword>
<feature type="initiator methionine" description="Removed" evidence="3">
    <location>
        <position position="1"/>
    </location>
</feature>
<feature type="chain" id="PRO_0000273461" description="Tripartite motif-containing protein 5">
    <location>
        <begin position="2"/>
        <end position="494"/>
    </location>
</feature>
<feature type="domain" description="B30.2/SPRY" evidence="7">
    <location>
        <begin position="282"/>
        <end position="494"/>
    </location>
</feature>
<feature type="zinc finger region" description="RING-type" evidence="6">
    <location>
        <begin position="15"/>
        <end position="59"/>
    </location>
</feature>
<feature type="zinc finger region" description="B box-type" evidence="5">
    <location>
        <begin position="91"/>
        <end position="133"/>
    </location>
</feature>
<feature type="region of interest" description="Required for interaction with GABARAP and for autophagy" evidence="2">
    <location>
        <begin position="186"/>
        <end position="199"/>
    </location>
</feature>
<feature type="coiled-coil region" evidence="4">
    <location>
        <begin position="132"/>
        <end position="241"/>
    </location>
</feature>
<feature type="binding site" evidence="5">
    <location>
        <position position="96"/>
    </location>
    <ligand>
        <name>Zn(2+)</name>
        <dbReference type="ChEBI" id="CHEBI:29105"/>
    </ligand>
</feature>
<feature type="binding site" evidence="5">
    <location>
        <position position="99"/>
    </location>
    <ligand>
        <name>Zn(2+)</name>
        <dbReference type="ChEBI" id="CHEBI:29105"/>
    </ligand>
</feature>
<feature type="binding site" evidence="5">
    <location>
        <position position="118"/>
    </location>
    <ligand>
        <name>Zn(2+)</name>
        <dbReference type="ChEBI" id="CHEBI:29105"/>
    </ligand>
</feature>
<feature type="binding site" evidence="5">
    <location>
        <position position="124"/>
    </location>
    <ligand>
        <name>Zn(2+)</name>
        <dbReference type="ChEBI" id="CHEBI:29105"/>
    </ligand>
</feature>
<feature type="modified residue" description="N-acetylalanine" evidence="3">
    <location>
        <position position="2"/>
    </location>
</feature>
<feature type="modified residue" description="Phosphoserine" evidence="3">
    <location>
        <position position="86"/>
    </location>
</feature>
<feature type="sequence conflict" description="In Ref. 1; AAV91980." evidence="8" ref="1">
    <original>E</original>
    <variation>K</variation>
    <location>
        <position position="12"/>
    </location>
</feature>
<feature type="sequence conflict" description="In Ref. 1; AAV91980." evidence="8" ref="1">
    <original>Q</original>
    <variation>R</variation>
    <location>
        <position position="68"/>
    </location>
</feature>
<feature type="sequence conflict" description="In Ref. 1; AAV91980." evidence="8" ref="1">
    <original>E</original>
    <variation>K</variation>
    <location>
        <position position="101"/>
    </location>
</feature>
<feature type="sequence conflict" description="In Ref. 1; AAV91980." evidence="8" ref="1">
    <original>V</original>
    <variation>M</variation>
    <location>
        <position position="141"/>
    </location>
</feature>
<feature type="sequence conflict" description="In Ref. 1; AAV91980." evidence="8" ref="1">
    <original>F</original>
    <variation>L</variation>
    <location>
        <position position="380"/>
    </location>
</feature>
<feature type="sequence conflict" description="In Ref. 1; AAV91980." evidence="8" ref="1">
    <original>I</original>
    <variation>V</variation>
    <location>
        <position position="427"/>
    </location>
</feature>
<feature type="sequence conflict" description="In Ref. 1; AAV91980." evidence="8" ref="1">
    <original>N</original>
    <variation>D</variation>
    <location>
        <position position="457"/>
    </location>
</feature>
<proteinExistence type="inferred from homology"/>
<dbReference type="EC" id="2.3.2.27"/>
<dbReference type="EMBL" id="AY843509">
    <property type="protein sequence ID" value="AAV91980.1"/>
    <property type="molecule type" value="Genomic_DNA"/>
</dbReference>
<dbReference type="EMBL" id="DQ229284">
    <property type="protein sequence ID" value="ABC33740.1"/>
    <property type="molecule type" value="Genomic_DNA"/>
</dbReference>
<dbReference type="SMR" id="Q1ACD6"/>
<dbReference type="UniPathway" id="UPA00143"/>
<dbReference type="GO" id="GO:0005634">
    <property type="term" value="C:nucleus"/>
    <property type="evidence" value="ECO:0007669"/>
    <property type="project" value="UniProtKB-SubCell"/>
</dbReference>
<dbReference type="GO" id="GO:0000932">
    <property type="term" value="C:P-body"/>
    <property type="evidence" value="ECO:0000250"/>
    <property type="project" value="UniProtKB"/>
</dbReference>
<dbReference type="GO" id="GO:0038187">
    <property type="term" value="F:pattern recognition receptor activity"/>
    <property type="evidence" value="ECO:0000250"/>
    <property type="project" value="UniProtKB"/>
</dbReference>
<dbReference type="GO" id="GO:0004842">
    <property type="term" value="F:ubiquitin-protein transferase activity"/>
    <property type="evidence" value="ECO:0000250"/>
    <property type="project" value="UniProtKB"/>
</dbReference>
<dbReference type="GO" id="GO:0008270">
    <property type="term" value="F:zinc ion binding"/>
    <property type="evidence" value="ECO:0007669"/>
    <property type="project" value="UniProtKB-KW"/>
</dbReference>
<dbReference type="GO" id="GO:0002218">
    <property type="term" value="P:activation of innate immune response"/>
    <property type="evidence" value="ECO:0000250"/>
    <property type="project" value="UniProtKB"/>
</dbReference>
<dbReference type="GO" id="GO:0006914">
    <property type="term" value="P:autophagy"/>
    <property type="evidence" value="ECO:0007669"/>
    <property type="project" value="UniProtKB-KW"/>
</dbReference>
<dbReference type="GO" id="GO:0051607">
    <property type="term" value="P:defense response to virus"/>
    <property type="evidence" value="ECO:0007669"/>
    <property type="project" value="UniProtKB-KW"/>
</dbReference>
<dbReference type="GO" id="GO:0045087">
    <property type="term" value="P:innate immune response"/>
    <property type="evidence" value="ECO:0007669"/>
    <property type="project" value="UniProtKB-KW"/>
</dbReference>
<dbReference type="GO" id="GO:0043123">
    <property type="term" value="P:positive regulation of canonical NF-kappaB signal transduction"/>
    <property type="evidence" value="ECO:0000250"/>
    <property type="project" value="UniProtKB"/>
</dbReference>
<dbReference type="GO" id="GO:0043410">
    <property type="term" value="P:positive regulation of MAPK cascade"/>
    <property type="evidence" value="ECO:0000250"/>
    <property type="project" value="UniProtKB"/>
</dbReference>
<dbReference type="GO" id="GO:0051092">
    <property type="term" value="P:positive regulation of NF-kappaB transcription factor activity"/>
    <property type="evidence" value="ECO:0000250"/>
    <property type="project" value="UniProtKB"/>
</dbReference>
<dbReference type="GO" id="GO:0070534">
    <property type="term" value="P:protein K63-linked ubiquitination"/>
    <property type="evidence" value="ECO:0000250"/>
    <property type="project" value="UniProtKB"/>
</dbReference>
<dbReference type="GO" id="GO:0031664">
    <property type="term" value="P:regulation of lipopolysaccharide-mediated signaling pathway"/>
    <property type="evidence" value="ECO:0000250"/>
    <property type="project" value="UniProtKB"/>
</dbReference>
<dbReference type="CDD" id="cd19761">
    <property type="entry name" value="Bbox2_TRIM5-like"/>
    <property type="match status" value="1"/>
</dbReference>
<dbReference type="CDD" id="cd16591">
    <property type="entry name" value="RING-HC_TRIM5-like_C-IV"/>
    <property type="match status" value="1"/>
</dbReference>
<dbReference type="CDD" id="cd15822">
    <property type="entry name" value="SPRY_PRY_TRIM5"/>
    <property type="match status" value="1"/>
</dbReference>
<dbReference type="FunFam" id="2.60.120.920:FF:000023">
    <property type="entry name" value="Tripartite motif-containing 5 (Predicted)"/>
    <property type="match status" value="1"/>
</dbReference>
<dbReference type="FunFam" id="3.30.160.60:FF:000386">
    <property type="entry name" value="Tripartite motif-containing 5 (Predicted)"/>
    <property type="match status" value="1"/>
</dbReference>
<dbReference type="FunFam" id="3.30.40.10:FF:000144">
    <property type="entry name" value="Tripartite motif-containing 5 (Predicted)"/>
    <property type="match status" value="1"/>
</dbReference>
<dbReference type="Gene3D" id="2.60.120.920">
    <property type="match status" value="1"/>
</dbReference>
<dbReference type="Gene3D" id="3.30.160.60">
    <property type="entry name" value="Classic Zinc Finger"/>
    <property type="match status" value="1"/>
</dbReference>
<dbReference type="Gene3D" id="3.30.40.10">
    <property type="entry name" value="Zinc/RING finger domain, C3HC4 (zinc finger)"/>
    <property type="match status" value="1"/>
</dbReference>
<dbReference type="InterPro" id="IPR001870">
    <property type="entry name" value="B30.2/SPRY"/>
</dbReference>
<dbReference type="InterPro" id="IPR043136">
    <property type="entry name" value="B30.2/SPRY_sf"/>
</dbReference>
<dbReference type="InterPro" id="IPR003879">
    <property type="entry name" value="Butyrophylin_SPRY"/>
</dbReference>
<dbReference type="InterPro" id="IPR013320">
    <property type="entry name" value="ConA-like_dom_sf"/>
</dbReference>
<dbReference type="InterPro" id="IPR003877">
    <property type="entry name" value="SPRY_dom"/>
</dbReference>
<dbReference type="InterPro" id="IPR050143">
    <property type="entry name" value="TRIM/RBCC"/>
</dbReference>
<dbReference type="InterPro" id="IPR027370">
    <property type="entry name" value="Znf-RING_euk"/>
</dbReference>
<dbReference type="InterPro" id="IPR000315">
    <property type="entry name" value="Znf_B-box"/>
</dbReference>
<dbReference type="InterPro" id="IPR001841">
    <property type="entry name" value="Znf_RING"/>
</dbReference>
<dbReference type="InterPro" id="IPR013083">
    <property type="entry name" value="Znf_RING/FYVE/PHD"/>
</dbReference>
<dbReference type="InterPro" id="IPR017907">
    <property type="entry name" value="Znf_RING_CS"/>
</dbReference>
<dbReference type="PANTHER" id="PTHR24103">
    <property type="entry name" value="E3 UBIQUITIN-PROTEIN LIGASE TRIM"/>
    <property type="match status" value="1"/>
</dbReference>
<dbReference type="Pfam" id="PF00622">
    <property type="entry name" value="SPRY"/>
    <property type="match status" value="1"/>
</dbReference>
<dbReference type="Pfam" id="PF00643">
    <property type="entry name" value="zf-B_box"/>
    <property type="match status" value="1"/>
</dbReference>
<dbReference type="Pfam" id="PF13445">
    <property type="entry name" value="zf-RING_UBOX"/>
    <property type="match status" value="1"/>
</dbReference>
<dbReference type="PRINTS" id="PR01407">
    <property type="entry name" value="BUTYPHLNCDUF"/>
</dbReference>
<dbReference type="SMART" id="SM00336">
    <property type="entry name" value="BBOX"/>
    <property type="match status" value="1"/>
</dbReference>
<dbReference type="SMART" id="SM00184">
    <property type="entry name" value="RING"/>
    <property type="match status" value="1"/>
</dbReference>
<dbReference type="SMART" id="SM00449">
    <property type="entry name" value="SPRY"/>
    <property type="match status" value="1"/>
</dbReference>
<dbReference type="SUPFAM" id="SSF57845">
    <property type="entry name" value="B-box zinc-binding domain"/>
    <property type="match status" value="1"/>
</dbReference>
<dbReference type="SUPFAM" id="SSF49899">
    <property type="entry name" value="Concanavalin A-like lectins/glucanases"/>
    <property type="match status" value="1"/>
</dbReference>
<dbReference type="SUPFAM" id="SSF57850">
    <property type="entry name" value="RING/U-box"/>
    <property type="match status" value="1"/>
</dbReference>
<dbReference type="PROSITE" id="PS50188">
    <property type="entry name" value="B302_SPRY"/>
    <property type="match status" value="1"/>
</dbReference>
<dbReference type="PROSITE" id="PS50119">
    <property type="entry name" value="ZF_BBOX"/>
    <property type="match status" value="1"/>
</dbReference>
<dbReference type="PROSITE" id="PS00518">
    <property type="entry name" value="ZF_RING_1"/>
    <property type="match status" value="1"/>
</dbReference>
<dbReference type="PROSITE" id="PS50089">
    <property type="entry name" value="ZF_RING_2"/>
    <property type="match status" value="1"/>
</dbReference>
<organism>
    <name type="scientific">Symphalangus syndactylus</name>
    <name type="common">Siamang</name>
    <name type="synonym">Hylobates syndactylus</name>
    <dbReference type="NCBI Taxonomy" id="9590"/>
    <lineage>
        <taxon>Eukaryota</taxon>
        <taxon>Metazoa</taxon>
        <taxon>Chordata</taxon>
        <taxon>Craniata</taxon>
        <taxon>Vertebrata</taxon>
        <taxon>Euteleostomi</taxon>
        <taxon>Mammalia</taxon>
        <taxon>Eutheria</taxon>
        <taxon>Euarchontoglires</taxon>
        <taxon>Primates</taxon>
        <taxon>Haplorrhini</taxon>
        <taxon>Catarrhini</taxon>
        <taxon>Hylobatidae</taxon>
        <taxon>Symphalangus</taxon>
    </lineage>
</organism>